<comment type="subcellular location">
    <subcellularLocation>
        <location evidence="1">Cell inner membrane</location>
        <topology evidence="1">Multi-pass membrane protein</topology>
    </subcellularLocation>
</comment>
<comment type="similarity">
    <text evidence="1">Belongs to the major facilitator superfamily. TCR/Tet family.</text>
</comment>
<keyword id="KW-0997">Cell inner membrane</keyword>
<keyword id="KW-1003">Cell membrane</keyword>
<keyword id="KW-0472">Membrane</keyword>
<keyword id="KW-0812">Transmembrane</keyword>
<keyword id="KW-1133">Transmembrane helix</keyword>
<keyword id="KW-0813">Transport</keyword>
<dbReference type="EMBL" id="CP000964">
    <property type="protein sequence ID" value="ACI08805.1"/>
    <property type="molecule type" value="Genomic_DNA"/>
</dbReference>
<dbReference type="SMR" id="B5XPB7"/>
<dbReference type="KEGG" id="kpe:KPK_1636"/>
<dbReference type="HOGENOM" id="CLU_000960_28_0_6"/>
<dbReference type="Proteomes" id="UP000001734">
    <property type="component" value="Chromosome"/>
</dbReference>
<dbReference type="GO" id="GO:0005886">
    <property type="term" value="C:plasma membrane"/>
    <property type="evidence" value="ECO:0007669"/>
    <property type="project" value="UniProtKB-SubCell"/>
</dbReference>
<dbReference type="GO" id="GO:0022857">
    <property type="term" value="F:transmembrane transporter activity"/>
    <property type="evidence" value="ECO:0007669"/>
    <property type="project" value="UniProtKB-UniRule"/>
</dbReference>
<dbReference type="CDD" id="cd17503">
    <property type="entry name" value="MFS_LmrB_MDR_like"/>
    <property type="match status" value="1"/>
</dbReference>
<dbReference type="FunFam" id="1.20.1250.20:FF:000021">
    <property type="entry name" value="Putative multidrug resistance protein MdtD"/>
    <property type="match status" value="1"/>
</dbReference>
<dbReference type="FunFam" id="1.20.1720.10:FF:000001">
    <property type="entry name" value="Putative multidrug resistance protein MdtD"/>
    <property type="match status" value="1"/>
</dbReference>
<dbReference type="Gene3D" id="1.20.1250.20">
    <property type="entry name" value="MFS general substrate transporter like domains"/>
    <property type="match status" value="1"/>
</dbReference>
<dbReference type="Gene3D" id="1.20.1720.10">
    <property type="entry name" value="Multidrug resistance protein D"/>
    <property type="match status" value="1"/>
</dbReference>
<dbReference type="HAMAP" id="MF_01577">
    <property type="entry name" value="MFS_MdtD"/>
    <property type="match status" value="1"/>
</dbReference>
<dbReference type="InterPro" id="IPR004638">
    <property type="entry name" value="EmrB-like"/>
</dbReference>
<dbReference type="InterPro" id="IPR011701">
    <property type="entry name" value="MFS"/>
</dbReference>
<dbReference type="InterPro" id="IPR020846">
    <property type="entry name" value="MFS_dom"/>
</dbReference>
<dbReference type="InterPro" id="IPR036259">
    <property type="entry name" value="MFS_trans_sf"/>
</dbReference>
<dbReference type="InterPro" id="IPR023721">
    <property type="entry name" value="Multi-R_MdtD"/>
</dbReference>
<dbReference type="NCBIfam" id="TIGR00711">
    <property type="entry name" value="efflux_EmrB"/>
    <property type="match status" value="1"/>
</dbReference>
<dbReference type="NCBIfam" id="NF007799">
    <property type="entry name" value="PRK10504.1"/>
    <property type="match status" value="1"/>
</dbReference>
<dbReference type="PANTHER" id="PTHR42718:SF46">
    <property type="entry name" value="BLR6921 PROTEIN"/>
    <property type="match status" value="1"/>
</dbReference>
<dbReference type="PANTHER" id="PTHR42718">
    <property type="entry name" value="MAJOR FACILITATOR SUPERFAMILY MULTIDRUG TRANSPORTER MFSC"/>
    <property type="match status" value="1"/>
</dbReference>
<dbReference type="Pfam" id="PF07690">
    <property type="entry name" value="MFS_1"/>
    <property type="match status" value="1"/>
</dbReference>
<dbReference type="PRINTS" id="PR01036">
    <property type="entry name" value="TCRTETB"/>
</dbReference>
<dbReference type="SUPFAM" id="SSF103473">
    <property type="entry name" value="MFS general substrate transporter"/>
    <property type="match status" value="1"/>
</dbReference>
<dbReference type="PROSITE" id="PS50850">
    <property type="entry name" value="MFS"/>
    <property type="match status" value="1"/>
</dbReference>
<gene>
    <name evidence="1" type="primary">mdtD</name>
    <name type="ordered locus">KPK_1636</name>
</gene>
<reference key="1">
    <citation type="journal article" date="2008" name="PLoS Genet.">
        <title>Complete genome sequence of the N2-fixing broad host range endophyte Klebsiella pneumoniae 342 and virulence predictions verified in mice.</title>
        <authorList>
            <person name="Fouts D.E."/>
            <person name="Tyler H.L."/>
            <person name="DeBoy R.T."/>
            <person name="Daugherty S."/>
            <person name="Ren Q."/>
            <person name="Badger J.H."/>
            <person name="Durkin A.S."/>
            <person name="Huot H."/>
            <person name="Shrivastava S."/>
            <person name="Kothari S."/>
            <person name="Dodson R.J."/>
            <person name="Mohamoud Y."/>
            <person name="Khouri H."/>
            <person name="Roesch L.F.W."/>
            <person name="Krogfelt K.A."/>
            <person name="Struve C."/>
            <person name="Triplett E.W."/>
            <person name="Methe B.A."/>
        </authorList>
    </citation>
    <scope>NUCLEOTIDE SEQUENCE [LARGE SCALE GENOMIC DNA]</scope>
    <source>
        <strain>342</strain>
    </source>
</reference>
<feature type="chain" id="PRO_0000365282" description="Putative multidrug resistance protein MdtD">
    <location>
        <begin position="1"/>
        <end position="471"/>
    </location>
</feature>
<feature type="transmembrane region" description="Helical" evidence="1">
    <location>
        <begin position="12"/>
        <end position="32"/>
    </location>
</feature>
<feature type="transmembrane region" description="Helical" evidence="1">
    <location>
        <begin position="49"/>
        <end position="69"/>
    </location>
</feature>
<feature type="transmembrane region" description="Helical" evidence="1">
    <location>
        <begin position="77"/>
        <end position="97"/>
    </location>
</feature>
<feature type="transmembrane region" description="Helical" evidence="1">
    <location>
        <begin position="106"/>
        <end position="126"/>
    </location>
</feature>
<feature type="transmembrane region" description="Helical" evidence="1">
    <location>
        <begin position="138"/>
        <end position="158"/>
    </location>
</feature>
<feature type="transmembrane region" description="Helical" evidence="1">
    <location>
        <begin position="165"/>
        <end position="185"/>
    </location>
</feature>
<feature type="transmembrane region" description="Helical" evidence="1">
    <location>
        <begin position="195"/>
        <end position="215"/>
    </location>
</feature>
<feature type="transmembrane region" description="Helical" evidence="1">
    <location>
        <begin position="220"/>
        <end position="240"/>
    </location>
</feature>
<feature type="transmembrane region" description="Helical" evidence="1">
    <location>
        <begin position="263"/>
        <end position="283"/>
    </location>
</feature>
<feature type="transmembrane region" description="Helical" evidence="1">
    <location>
        <begin position="286"/>
        <end position="306"/>
    </location>
</feature>
<feature type="transmembrane region" description="Helical" evidence="1">
    <location>
        <begin position="342"/>
        <end position="362"/>
    </location>
</feature>
<feature type="transmembrane region" description="Helical" evidence="1">
    <location>
        <begin position="393"/>
        <end position="413"/>
    </location>
</feature>
<feature type="transmembrane region" description="Helical" evidence="1">
    <location>
        <begin position="431"/>
        <end position="451"/>
    </location>
</feature>
<protein>
    <recommendedName>
        <fullName evidence="1">Putative multidrug resistance protein MdtD</fullName>
    </recommendedName>
</protein>
<organism>
    <name type="scientific">Klebsiella pneumoniae (strain 342)</name>
    <dbReference type="NCBI Taxonomy" id="507522"/>
    <lineage>
        <taxon>Bacteria</taxon>
        <taxon>Pseudomonadati</taxon>
        <taxon>Pseudomonadota</taxon>
        <taxon>Gammaproteobacteria</taxon>
        <taxon>Enterobacterales</taxon>
        <taxon>Enterobacteriaceae</taxon>
        <taxon>Klebsiella/Raoultella group</taxon>
        <taxon>Klebsiella</taxon>
        <taxon>Klebsiella pneumoniae complex</taxon>
    </lineage>
</organism>
<sequence length="471" mass="50735">MTDLPASVRWQLWIVAFGFFMQSLDTTIVNTALPSMAKSLGESPLHMHMIIVSYVLTVAVMLPASGWLADRVGVRNIFFTAIVLFTAGSLFCAQASTLDQLVMARVLQGIGGAMMVPVGRLTVMKIVPRDQYMAAMTFVTLPGQVGPLLGPALGGVLVEYASWHWIFLINIPVGIVGAIATLCLMPNYTLQTRRFDLSGFLLLAAGMATLTLALDGQKGLGISSRWLAGLVAVGLAALLLYLWHARGNARALFSLNLFRNRTFSLGLGGSFAGRIGSGMLPFMTPVFLQIGLGFSPFHAGLMMIPMVLGSMGMKRIVVQVVNRFGYRRVLVASTLGLAAVSLLFMFSALAGWYYALPLVLFLQGMINSSRFSSMNTLTLKDLPDDLASSGNSLLSMVMQLSMSIGVTIAGLLLGLYGQQHMSLDAASTHQVFLYTYLSMAAIIALPALIFSRVPDDVGTNTVIRRRNRSGS</sequence>
<evidence type="ECO:0000255" key="1">
    <source>
        <dbReference type="HAMAP-Rule" id="MF_01577"/>
    </source>
</evidence>
<name>MDTD_KLEP3</name>
<proteinExistence type="inferred from homology"/>
<accession>B5XPB7</accession>